<sequence>MVREEEKGIPVRVVRCRPLVPKETSEGCQMCLSFVPGEPQVIVGSDKAFTYDYVFDPSVEQEEVFNTAVAPLIRGIFKGYNATVLAYGQTGSGKTYSMGGTYTASQEHDPSMGVIPRVIKLLFKEKEQRQDWEFVLKVSYLEIYNEDILDLLCSSRERSSQISIREDPKEGIKIVGLTERNVASARDTVSCLEQGNNCRTVASTAMNSQSSRSHAIFTICIDQKKKNDKNSSFHSKLHLVDLAGSERQKKTKAEGDRLKEGININRGLLCLGNVISALGEENKKGGFVPYRDSKLTRLLQDSLGGNSHTLMIACVSPADSNLEETLNTLRYADRARKIKNKPIVNVDPQAAELNHLKQQVQQLQVLLLQAHGGTLPVSINSMAPSENLQSLMEKNQSLMEENEKLSRGLSEAAGQTAQMLERIIVTEQENEKMNAKLEQLQQHAVCKLDLQKLLETVEDEELKENVEVIRNLQQVLAQFQSESAAAAEAATEMANAEQDAAGEAETGQVTKRSSDDFTTQHALRQAQMSKELVELNKALALKEALAKKMIQNDSQLEPIQSQYQTNIKDLELEVSNLQKEKEELILALSMAKKDVNQAKLSERRRKRLQELEGQINELKKKLNEQAKLLKLKESTERTVSKLNQEIREMKNQRVQLMRQMKEDAEKFRQWKQQKDKEVIQLKERDRKRQYELLKLERDFQKQASVLRRKTEEAAAANKRLKDALQKQREAADKRKESQNRGMEGVAARVKSWLANEVEVLVSTEEARRHLADLLEDRKILAQELLQLKEKKESGENPPSKLRRRTYSITDLQASEMDLSLSKQIESLETEMELRSAQIADLQQKLLDADNGDRVKQRWDNIATILEAKCALKYLLGELVSSKVQESKLESSLQQSKTNCSDIQKMLIEERNHATEMEAEFQNQLLLQEQQHQQEVLYLLSQFQQKEAPGKGVEDSLSEQEKQMQERLKFQEKELEKMREICEKNQELLQENDVLKQKMLLVQVASGQKLRRDQQVSPESPDSPFDYIPPKPKTRRQTVAKPRAPTPEMNVEELFSDSEESGEEEDAEWVPVKAAKGTKKSATGCFCKGRCGNRQCGCRKQKVGCTAGCSCDSTKCRNRDPGFQDATVCEDQTKDSEGSFKLEDLRDVTAGETFFQPVYSPPTMKVLKDITDQGVFMKKPSTAASLLVRDEESQENQLPFVKKKKRMLSSNTSFFSGCTPIKEEID</sequence>
<evidence type="ECO:0000250" key="1">
    <source>
        <dbReference type="UniProtKB" id="O95239"/>
    </source>
</evidence>
<evidence type="ECO:0000255" key="2"/>
<evidence type="ECO:0000255" key="3">
    <source>
        <dbReference type="PROSITE-ProRule" id="PRU00283"/>
    </source>
</evidence>
<evidence type="ECO:0000256" key="4">
    <source>
        <dbReference type="SAM" id="MobiDB-lite"/>
    </source>
</evidence>
<evidence type="ECO:0000269" key="5">
    <source>
    </source>
</evidence>
<evidence type="ECO:0000305" key="6"/>
<evidence type="ECO:0000305" key="7">
    <source>
    </source>
</evidence>
<feature type="chain" id="PRO_0000125439" description="Chromosome-associated kinesin KIF4">
    <location>
        <begin position="1"/>
        <end position="1225"/>
    </location>
</feature>
<feature type="domain" description="Kinesin motor" evidence="3">
    <location>
        <begin position="9"/>
        <end position="338"/>
    </location>
</feature>
<feature type="region of interest" description="Disordered" evidence="4">
    <location>
        <begin position="498"/>
        <end position="520"/>
    </location>
</feature>
<feature type="region of interest" description="Disordered" evidence="4">
    <location>
        <begin position="717"/>
        <end position="744"/>
    </location>
</feature>
<feature type="region of interest" description="Globular">
    <location>
        <begin position="1004"/>
        <end position="1225"/>
    </location>
</feature>
<feature type="region of interest" description="Disordered" evidence="4">
    <location>
        <begin position="1006"/>
        <end position="1047"/>
    </location>
</feature>
<feature type="coiled-coil region" evidence="2">
    <location>
        <begin position="352"/>
        <end position="1003"/>
    </location>
</feature>
<feature type="compositionally biased region" description="Polar residues" evidence="4">
    <location>
        <begin position="507"/>
        <end position="520"/>
    </location>
</feature>
<feature type="compositionally biased region" description="Basic and acidic residues" evidence="4">
    <location>
        <begin position="719"/>
        <end position="738"/>
    </location>
</feature>
<feature type="binding site" evidence="3">
    <location>
        <begin position="88"/>
        <end position="95"/>
    </location>
    <ligand>
        <name>ATP</name>
        <dbReference type="ChEBI" id="CHEBI:30616"/>
    </ligand>
</feature>
<feature type="sequence conflict" description="In Ref. 2." evidence="6" ref="2">
    <original>KG</original>
    <variation>RI</variation>
    <location>
        <begin position="1087"/>
        <end position="1088"/>
    </location>
</feature>
<proteinExistence type="evidence at transcript level"/>
<reference key="1">
    <citation type="journal article" date="1995" name="J. Cell Biol.">
        <title>Chromokinesin: a DNA-binding, kinesin-like nuclear protein.</title>
        <authorList>
            <person name="Wang S.Z."/>
            <person name="Adler R."/>
        </authorList>
    </citation>
    <scope>NUCLEOTIDE SEQUENCE [MRNA]</scope>
    <scope>FUNCTION</scope>
    <scope>SUBCELLULAR LOCATION</scope>
    <scope>TISSUE SPECIFICITY</scope>
    <source>
        <strain>White leghorn</strain>
        <tissue>Embryonic retina</tissue>
    </source>
</reference>
<reference key="2">
    <citation type="journal article" date="1994" name="Proc. Natl. Acad. Sci. U.S.A.">
        <title>A developmentally regulated basic-leucine zipper-like gene and its expression in embryonic retina and lens.</title>
        <authorList>
            <person name="Wang S.Z."/>
            <person name="Adler R."/>
        </authorList>
    </citation>
    <scope>NUCLEOTIDE SEQUENCE [MRNA] OF 728-1088</scope>
    <source>
        <strain>White leghorn</strain>
        <tissue>Embryonic retina</tissue>
    </source>
</reference>
<protein>
    <recommendedName>
        <fullName>Chromosome-associated kinesin KIF4</fullName>
    </recommendedName>
    <alternativeName>
        <fullName>Chromokinesin</fullName>
    </alternativeName>
</protein>
<dbReference type="EMBL" id="U18309">
    <property type="protein sequence ID" value="AAC59666.1"/>
    <property type="molecule type" value="mRNA"/>
</dbReference>
<dbReference type="EMBL" id="U04821">
    <property type="protein sequence ID" value="AAA18960.1"/>
    <property type="molecule type" value="mRNA"/>
</dbReference>
<dbReference type="PIR" id="A56514">
    <property type="entry name" value="A56514"/>
</dbReference>
<dbReference type="RefSeq" id="NP_990306.1">
    <property type="nucleotide sequence ID" value="NM_204975.1"/>
</dbReference>
<dbReference type="SMR" id="Q90640"/>
<dbReference type="FunCoup" id="Q90640">
    <property type="interactions" value="226"/>
</dbReference>
<dbReference type="STRING" id="9031.ENSGALP00000006656"/>
<dbReference type="GlyGen" id="Q90640">
    <property type="glycosylation" value="1 site"/>
</dbReference>
<dbReference type="PaxDb" id="9031-ENSGALP00000006656"/>
<dbReference type="GeneID" id="395823"/>
<dbReference type="KEGG" id="gga:395823"/>
<dbReference type="CTD" id="285643"/>
<dbReference type="VEuPathDB" id="HostDB:geneid_395823"/>
<dbReference type="eggNOG" id="KOG0244">
    <property type="taxonomic scope" value="Eukaryota"/>
</dbReference>
<dbReference type="InParanoid" id="Q90640"/>
<dbReference type="OrthoDB" id="3176171at2759"/>
<dbReference type="PhylomeDB" id="Q90640"/>
<dbReference type="PRO" id="PR:Q90640"/>
<dbReference type="Proteomes" id="UP000000539">
    <property type="component" value="Unassembled WGS sequence"/>
</dbReference>
<dbReference type="GO" id="GO:0005694">
    <property type="term" value="C:chromosome"/>
    <property type="evidence" value="ECO:0007669"/>
    <property type="project" value="UniProtKB-SubCell"/>
</dbReference>
<dbReference type="GO" id="GO:0005737">
    <property type="term" value="C:cytoplasm"/>
    <property type="evidence" value="ECO:0007669"/>
    <property type="project" value="UniProtKB-KW"/>
</dbReference>
<dbReference type="GO" id="GO:0005874">
    <property type="term" value="C:microtubule"/>
    <property type="evidence" value="ECO:0007669"/>
    <property type="project" value="UniProtKB-KW"/>
</dbReference>
<dbReference type="GO" id="GO:0005875">
    <property type="term" value="C:microtubule associated complex"/>
    <property type="evidence" value="ECO:0000318"/>
    <property type="project" value="GO_Central"/>
</dbReference>
<dbReference type="GO" id="GO:0005634">
    <property type="term" value="C:nucleus"/>
    <property type="evidence" value="ECO:0007669"/>
    <property type="project" value="UniProtKB-SubCell"/>
</dbReference>
<dbReference type="GO" id="GO:0005524">
    <property type="term" value="F:ATP binding"/>
    <property type="evidence" value="ECO:0007669"/>
    <property type="project" value="UniProtKB-KW"/>
</dbReference>
<dbReference type="GO" id="GO:0003677">
    <property type="term" value="F:DNA binding"/>
    <property type="evidence" value="ECO:0007669"/>
    <property type="project" value="UniProtKB-KW"/>
</dbReference>
<dbReference type="GO" id="GO:0051536">
    <property type="term" value="F:iron-sulfur cluster binding"/>
    <property type="evidence" value="ECO:0007669"/>
    <property type="project" value="UniProtKB-KW"/>
</dbReference>
<dbReference type="GO" id="GO:0046872">
    <property type="term" value="F:metal ion binding"/>
    <property type="evidence" value="ECO:0007669"/>
    <property type="project" value="UniProtKB-KW"/>
</dbReference>
<dbReference type="GO" id="GO:0008017">
    <property type="term" value="F:microtubule binding"/>
    <property type="evidence" value="ECO:0007669"/>
    <property type="project" value="InterPro"/>
</dbReference>
<dbReference type="GO" id="GO:0003777">
    <property type="term" value="F:microtubule motor activity"/>
    <property type="evidence" value="ECO:0000318"/>
    <property type="project" value="GO_Central"/>
</dbReference>
<dbReference type="GO" id="GO:0007018">
    <property type="term" value="P:microtubule-based movement"/>
    <property type="evidence" value="ECO:0007669"/>
    <property type="project" value="InterPro"/>
</dbReference>
<dbReference type="GO" id="GO:0007052">
    <property type="term" value="P:mitotic spindle organization"/>
    <property type="evidence" value="ECO:0000318"/>
    <property type="project" value="GO_Central"/>
</dbReference>
<dbReference type="GO" id="GO:0051231">
    <property type="term" value="P:spindle elongation"/>
    <property type="evidence" value="ECO:0000318"/>
    <property type="project" value="GO_Central"/>
</dbReference>
<dbReference type="CDD" id="cd01372">
    <property type="entry name" value="KISc_KIF4"/>
    <property type="match status" value="1"/>
</dbReference>
<dbReference type="FunFam" id="3.40.850.10:FF:000038">
    <property type="entry name" value="chromosome-associated kinesin KIF4A"/>
    <property type="match status" value="1"/>
</dbReference>
<dbReference type="Gene3D" id="3.40.850.10">
    <property type="entry name" value="Kinesin motor domain"/>
    <property type="match status" value="1"/>
</dbReference>
<dbReference type="InterPro" id="IPR027640">
    <property type="entry name" value="Kinesin-like_fam"/>
</dbReference>
<dbReference type="InterPro" id="IPR019821">
    <property type="entry name" value="Kinesin_motor_CS"/>
</dbReference>
<dbReference type="InterPro" id="IPR001752">
    <property type="entry name" value="Kinesin_motor_dom"/>
</dbReference>
<dbReference type="InterPro" id="IPR036961">
    <property type="entry name" value="Kinesin_motor_dom_sf"/>
</dbReference>
<dbReference type="InterPro" id="IPR027417">
    <property type="entry name" value="P-loop_NTPase"/>
</dbReference>
<dbReference type="InterPro" id="IPR033467">
    <property type="entry name" value="Tesmin/TSO1-like_CXC"/>
</dbReference>
<dbReference type="PANTHER" id="PTHR47969">
    <property type="entry name" value="CHROMOSOME-ASSOCIATED KINESIN KIF4A-RELATED"/>
    <property type="match status" value="1"/>
</dbReference>
<dbReference type="PANTHER" id="PTHR47969:SF15">
    <property type="entry name" value="CHROMOSOME-ASSOCIATED KINESIN KIF4A-RELATED"/>
    <property type="match status" value="1"/>
</dbReference>
<dbReference type="Pfam" id="PF00225">
    <property type="entry name" value="Kinesin"/>
    <property type="match status" value="1"/>
</dbReference>
<dbReference type="PRINTS" id="PR00380">
    <property type="entry name" value="KINESINHEAVY"/>
</dbReference>
<dbReference type="SMART" id="SM01114">
    <property type="entry name" value="CXC"/>
    <property type="match status" value="1"/>
</dbReference>
<dbReference type="SMART" id="SM00129">
    <property type="entry name" value="KISc"/>
    <property type="match status" value="1"/>
</dbReference>
<dbReference type="SUPFAM" id="SSF52540">
    <property type="entry name" value="P-loop containing nucleoside triphosphate hydrolases"/>
    <property type="match status" value="1"/>
</dbReference>
<dbReference type="PROSITE" id="PS00411">
    <property type="entry name" value="KINESIN_MOTOR_1"/>
    <property type="match status" value="1"/>
</dbReference>
<dbReference type="PROSITE" id="PS50067">
    <property type="entry name" value="KINESIN_MOTOR_2"/>
    <property type="match status" value="1"/>
</dbReference>
<organism>
    <name type="scientific">Gallus gallus</name>
    <name type="common">Chicken</name>
    <dbReference type="NCBI Taxonomy" id="9031"/>
    <lineage>
        <taxon>Eukaryota</taxon>
        <taxon>Metazoa</taxon>
        <taxon>Chordata</taxon>
        <taxon>Craniata</taxon>
        <taxon>Vertebrata</taxon>
        <taxon>Euteleostomi</taxon>
        <taxon>Archelosauria</taxon>
        <taxon>Archosauria</taxon>
        <taxon>Dinosauria</taxon>
        <taxon>Saurischia</taxon>
        <taxon>Theropoda</taxon>
        <taxon>Coelurosauria</taxon>
        <taxon>Aves</taxon>
        <taxon>Neognathae</taxon>
        <taxon>Galloanserae</taxon>
        <taxon>Galliformes</taxon>
        <taxon>Phasianidae</taxon>
        <taxon>Phasianinae</taxon>
        <taxon>Gallus</taxon>
    </lineage>
</organism>
<name>KIF4_CHICK</name>
<accession>Q90640</accession>
<accession>Q90608</accession>
<keyword id="KW-0067">ATP-binding</keyword>
<keyword id="KW-0158">Chromosome</keyword>
<keyword id="KW-0175">Coiled coil</keyword>
<keyword id="KW-0963">Cytoplasm</keyword>
<keyword id="KW-0206">Cytoskeleton</keyword>
<keyword id="KW-0238">DNA-binding</keyword>
<keyword id="KW-0408">Iron</keyword>
<keyword id="KW-0411">Iron-sulfur</keyword>
<keyword id="KW-0479">Metal-binding</keyword>
<keyword id="KW-0493">Microtubule</keyword>
<keyword id="KW-0505">Motor protein</keyword>
<keyword id="KW-0547">Nucleotide-binding</keyword>
<keyword id="KW-0539">Nucleus</keyword>
<keyword id="KW-1185">Reference proteome</keyword>
<comment type="function">
    <text evidence="1 5">Iron-sulfur (Fe-S) cluster binding motor protein that has a role in chromosome segregation during mitosis (By similarity). Required for mitotic chromosomal positioning and bipolar spindle stabilization.</text>
</comment>
<comment type="cofactor">
    <cofactor evidence="1">
        <name>[2Fe-2S] cluster</name>
        <dbReference type="ChEBI" id="CHEBI:190135"/>
    </cofactor>
    <cofactor evidence="1">
        <name>[4Fe-4S] cluster</name>
        <dbReference type="ChEBI" id="CHEBI:49883"/>
    </cofactor>
    <text evidence="1">Binds 1 [4Fe-4S] cluster (By similarity). In the presence of oxygen, the [4Fe-4S] cluster may be converted to [2Fe-2S] (By similarity).</text>
</comment>
<comment type="subcellular location">
    <subcellularLocation>
        <location evidence="5">Nucleus</location>
    </subcellularLocation>
    <subcellularLocation>
        <location evidence="5">Chromosome</location>
    </subcellularLocation>
    <subcellularLocation>
        <location evidence="7">Cytoplasm</location>
        <location evidence="7">Cytoskeleton</location>
    </subcellularLocation>
</comment>
<comment type="tissue specificity">
    <text evidence="5">Expressed in proliferating cells; neuroepithelium of embryos.</text>
</comment>
<comment type="similarity">
    <text evidence="3">Belongs to the TRAFAC class myosin-kinesin ATPase superfamily. Kinesin family. Chromokinesin subfamily.</text>
</comment>
<gene>
    <name type="primary">KIF4</name>
    <name type="synonym">KIF4A</name>
</gene>